<sequence length="193" mass="21333">MSDDDSRASTSSSSSSSSNQQTEKEGSTPKKKESKVSMSKNSKLLSTSAKRIQKELADITLDPPPNCSAGPKGDNIYEWRSTILGPPGSVYEGGVFFLDITFTPEYPFKPPKVTFRTRIYHCNINSQGVICLDILKDNWSPALTISKVLLSICSLLTDCNPADPLVGSIATQYMTNRAEHDRMARQWTKRYAT</sequence>
<reference key="1">
    <citation type="journal article" date="1996" name="J. Biol. Chem.">
        <title>Identification of a novel family of ubiquitin-conjugating enzymes with distinct amino-terminal extensions.</title>
        <authorList>
            <person name="Matuschewski K."/>
            <person name="Hauser H.P."/>
            <person name="Treier M."/>
            <person name="Jentsch S."/>
        </authorList>
    </citation>
    <scope>NUCLEOTIDE SEQUENCE [MRNA]</scope>
    <source>
        <strain>BALB/cJ</strain>
        <tissue>Brain</tissue>
    </source>
</reference>
<reference key="2">
    <citation type="journal article" date="2004" name="Genome Res.">
        <title>The status, quality, and expansion of the NIH full-length cDNA project: the Mammalian Gene Collection (MGC).</title>
        <authorList>
            <consortium name="The MGC Project Team"/>
        </authorList>
    </citation>
    <scope>NUCLEOTIDE SEQUENCE [LARGE SCALE MRNA]</scope>
    <source>
        <tissue>Mammary tumor</tissue>
    </source>
</reference>
<reference key="3">
    <citation type="journal article" date="2010" name="Cell">
        <title>A tissue-specific atlas of mouse protein phosphorylation and expression.</title>
        <authorList>
            <person name="Huttlin E.L."/>
            <person name="Jedrychowski M.P."/>
            <person name="Elias J.E."/>
            <person name="Goswami T."/>
            <person name="Rad R."/>
            <person name="Beausoleil S.A."/>
            <person name="Villen J."/>
            <person name="Haas W."/>
            <person name="Sowa M.E."/>
            <person name="Gygi S.P."/>
        </authorList>
    </citation>
    <scope>IDENTIFICATION BY MASS SPECTROMETRY [LARGE SCALE ANALYSIS]</scope>
    <source>
        <tissue>Brain</tissue>
        <tissue>Kidney</tissue>
        <tissue>Liver</tissue>
        <tissue>Lung</tissue>
        <tissue>Pancreas</tissue>
        <tissue>Spleen</tissue>
        <tissue>Testis</tissue>
    </source>
</reference>
<comment type="function">
    <text evidence="1">Accepts ubiquitin from the E1 complex and catalyzes its covalent attachment to other proteins. Catalyzes the covalent attachment of ISG15 to other proteins. Mediates the selective degradation of short-lived and abnormal proteins. In vitro also catalyzes 'Lys-48'-linked polyubiquitination.</text>
</comment>
<comment type="catalytic activity">
    <reaction evidence="1 2 3">
        <text>S-ubiquitinyl-[E1 ubiquitin-activating enzyme]-L-cysteine + [E2 ubiquitin-conjugating enzyme]-L-cysteine = [E1 ubiquitin-activating enzyme]-L-cysteine + S-ubiquitinyl-[E2 ubiquitin-conjugating enzyme]-L-cysteine.</text>
        <dbReference type="EC" id="2.3.2.23"/>
    </reaction>
</comment>
<comment type="catalytic activity">
    <reaction evidence="1">
        <text>S-ubiquitinyl-[E1 ubiquitin-activating enzyme]-L-cysteine + [acceptor protein]-L-lysine = [E1 ubiquitin-activating enzyme]-L-cysteine + N(6)-monoubiquitinyl-[acceptor protein]-L-lysine.</text>
        <dbReference type="EC" id="2.3.2.24"/>
    </reaction>
</comment>
<comment type="pathway">
    <text evidence="2">Protein modification; protein ubiquitination.</text>
</comment>
<comment type="subunit">
    <text>Interacts with RNF14.</text>
</comment>
<comment type="subcellular location">
    <subcellularLocation>
        <location evidence="1">Nucleus</location>
    </subcellularLocation>
</comment>
<comment type="PTM">
    <text evidence="1">ISGylation suppresses ubiquitin E2 enzyme activity.</text>
</comment>
<comment type="PTM">
    <text evidence="1">Autoubiquitinated.</text>
</comment>
<comment type="similarity">
    <text evidence="2">Belongs to the ubiquitin-conjugating enzyme family.</text>
</comment>
<name>UB2E1_MOUSE</name>
<protein>
    <recommendedName>
        <fullName>Ubiquitin-conjugating enzyme E2 E1</fullName>
        <ecNumber>2.3.2.23</ecNumber>
    </recommendedName>
    <alternativeName>
        <fullName>(E3-independent) E2 ubiquitin-conjugating enzyme E1</fullName>
        <ecNumber>2.3.2.24</ecNumber>
    </alternativeName>
    <alternativeName>
        <fullName>E2 ubiquitin-conjugating enzyme E1</fullName>
    </alternativeName>
    <alternativeName>
        <fullName>UbcM3</fullName>
    </alternativeName>
    <alternativeName>
        <fullName>Ubiquitin carrier protein E1</fullName>
    </alternativeName>
    <alternativeName>
        <fullName>Ubiquitin-protein ligase E1</fullName>
    </alternativeName>
</protein>
<keyword id="KW-0007">Acetylation</keyword>
<keyword id="KW-0067">ATP-binding</keyword>
<keyword id="KW-1017">Isopeptide bond</keyword>
<keyword id="KW-0547">Nucleotide-binding</keyword>
<keyword id="KW-0539">Nucleus</keyword>
<keyword id="KW-1185">Reference proteome</keyword>
<keyword id="KW-0808">Transferase</keyword>
<keyword id="KW-0832">Ubl conjugation</keyword>
<keyword id="KW-0833">Ubl conjugation pathway</keyword>
<accession>P52482</accession>
<dbReference type="EC" id="2.3.2.23"/>
<dbReference type="EC" id="2.3.2.24"/>
<dbReference type="EMBL" id="X92665">
    <property type="protein sequence ID" value="CAA63353.1"/>
    <property type="molecule type" value="mRNA"/>
</dbReference>
<dbReference type="EMBL" id="BC003781">
    <property type="protein sequence ID" value="AAH03781.1"/>
    <property type="molecule type" value="mRNA"/>
</dbReference>
<dbReference type="CCDS" id="CCDS26837.1"/>
<dbReference type="RefSeq" id="NP_033481.1">
    <property type="nucleotide sequence ID" value="NM_009455.3"/>
</dbReference>
<dbReference type="SMR" id="P52482"/>
<dbReference type="BioGRID" id="204406">
    <property type="interactions" value="5"/>
</dbReference>
<dbReference type="FunCoup" id="P52482">
    <property type="interactions" value="2992"/>
</dbReference>
<dbReference type="IntAct" id="P52482">
    <property type="interactions" value="1"/>
</dbReference>
<dbReference type="STRING" id="10090.ENSMUSP00000022296"/>
<dbReference type="iPTMnet" id="P52482"/>
<dbReference type="PhosphoSitePlus" id="P52482"/>
<dbReference type="SwissPalm" id="P52482"/>
<dbReference type="jPOST" id="P52482"/>
<dbReference type="PaxDb" id="10090-ENSMUSP00000022296"/>
<dbReference type="PeptideAtlas" id="P52482"/>
<dbReference type="ProteomicsDB" id="297771"/>
<dbReference type="Pumba" id="P52482"/>
<dbReference type="Antibodypedia" id="45210">
    <property type="antibodies" value="115 antibodies from 23 providers"/>
</dbReference>
<dbReference type="DNASU" id="22194"/>
<dbReference type="Ensembl" id="ENSMUST00000022296.7">
    <property type="protein sequence ID" value="ENSMUSP00000022296.7"/>
    <property type="gene ID" value="ENSMUSG00000021774.14"/>
</dbReference>
<dbReference type="GeneID" id="22194"/>
<dbReference type="KEGG" id="mmu:22194"/>
<dbReference type="UCSC" id="uc007shu.1">
    <property type="organism name" value="mouse"/>
</dbReference>
<dbReference type="AGR" id="MGI:107411"/>
<dbReference type="CTD" id="7324"/>
<dbReference type="MGI" id="MGI:107411">
    <property type="gene designation" value="Ube2e1"/>
</dbReference>
<dbReference type="VEuPathDB" id="HostDB:ENSMUSG00000021774"/>
<dbReference type="eggNOG" id="KOG0417">
    <property type="taxonomic scope" value="Eukaryota"/>
</dbReference>
<dbReference type="GeneTree" id="ENSGT00940000156415"/>
<dbReference type="HOGENOM" id="CLU_030988_14_4_1"/>
<dbReference type="InParanoid" id="P52482"/>
<dbReference type="OMA" id="IVFRTRI"/>
<dbReference type="OrthoDB" id="7851174at2759"/>
<dbReference type="PhylomeDB" id="P52482"/>
<dbReference type="TreeFam" id="TF101117"/>
<dbReference type="BRENDA" id="2.3.2.B8">
    <property type="organism ID" value="3474"/>
</dbReference>
<dbReference type="Reactome" id="R-MMU-1169408">
    <property type="pathway name" value="ISG15 antiviral mechanism"/>
</dbReference>
<dbReference type="Reactome" id="R-MMU-141430">
    <property type="pathway name" value="Inactivation of APC/C via direct inhibition of the APC/C complex"/>
</dbReference>
<dbReference type="Reactome" id="R-MMU-174048">
    <property type="pathway name" value="APC/C:Cdc20 mediated degradation of Cyclin B"/>
</dbReference>
<dbReference type="Reactome" id="R-MMU-174084">
    <property type="pathway name" value="Autodegradation of Cdh1 by Cdh1:APC/C"/>
</dbReference>
<dbReference type="Reactome" id="R-MMU-174154">
    <property type="pathway name" value="APC/C:Cdc20 mediated degradation of Securin"/>
</dbReference>
<dbReference type="Reactome" id="R-MMU-174178">
    <property type="pathway name" value="APC/C:Cdh1 mediated degradation of Cdc20 and other APC/C:Cdh1 targeted proteins in late mitosis/early G1"/>
</dbReference>
<dbReference type="Reactome" id="R-MMU-174184">
    <property type="pathway name" value="Cdc20:Phospho-APC/C mediated degradation of Cyclin A"/>
</dbReference>
<dbReference type="Reactome" id="R-MMU-176407">
    <property type="pathway name" value="Conversion from APC/C:Cdc20 to APC/C:Cdh1 in late anaphase"/>
</dbReference>
<dbReference type="Reactome" id="R-MMU-176408">
    <property type="pathway name" value="Regulation of APC/C activators between G1/S and early anaphase"/>
</dbReference>
<dbReference type="Reactome" id="R-MMU-176409">
    <property type="pathway name" value="APC/C:Cdc20 mediated degradation of mitotic proteins"/>
</dbReference>
<dbReference type="Reactome" id="R-MMU-176412">
    <property type="pathway name" value="Phosphorylation of the APC/C"/>
</dbReference>
<dbReference type="Reactome" id="R-MMU-179409">
    <property type="pathway name" value="APC-Cdc20 mediated degradation of Nek2A"/>
</dbReference>
<dbReference type="Reactome" id="R-MMU-2467813">
    <property type="pathway name" value="Separation of Sister Chromatids"/>
</dbReference>
<dbReference type="Reactome" id="R-MMU-2559582">
    <property type="pathway name" value="Senescence-Associated Secretory Phenotype (SASP)"/>
</dbReference>
<dbReference type="Reactome" id="R-MMU-68867">
    <property type="pathway name" value="Assembly of the pre-replicative complex"/>
</dbReference>
<dbReference type="Reactome" id="R-MMU-69017">
    <property type="pathway name" value="CDK-mediated phosphorylation and removal of Cdc6"/>
</dbReference>
<dbReference type="Reactome" id="R-MMU-8866652">
    <property type="pathway name" value="Synthesis of active ubiquitin: roles of E1 and E2 enzymes"/>
</dbReference>
<dbReference type="Reactome" id="R-MMU-8866654">
    <property type="pathway name" value="E3 ubiquitin ligases ubiquitinate target proteins"/>
</dbReference>
<dbReference type="Reactome" id="R-MMU-983168">
    <property type="pathway name" value="Antigen processing: Ubiquitination &amp; Proteasome degradation"/>
</dbReference>
<dbReference type="UniPathway" id="UPA00143"/>
<dbReference type="BioGRID-ORCS" id="22194">
    <property type="hits" value="5 hits in 81 CRISPR screens"/>
</dbReference>
<dbReference type="ChiTaRS" id="Ube2e1">
    <property type="organism name" value="mouse"/>
</dbReference>
<dbReference type="PRO" id="PR:P52482"/>
<dbReference type="Proteomes" id="UP000000589">
    <property type="component" value="Chromosome 14"/>
</dbReference>
<dbReference type="RNAct" id="P52482">
    <property type="molecule type" value="protein"/>
</dbReference>
<dbReference type="Bgee" id="ENSMUSG00000021774">
    <property type="expression patterns" value="Expressed in otic placode and 271 other cell types or tissues"/>
</dbReference>
<dbReference type="ExpressionAtlas" id="P52482">
    <property type="expression patterns" value="baseline and differential"/>
</dbReference>
<dbReference type="GO" id="GO:0005634">
    <property type="term" value="C:nucleus"/>
    <property type="evidence" value="ECO:0000250"/>
    <property type="project" value="UniProtKB"/>
</dbReference>
<dbReference type="GO" id="GO:0000151">
    <property type="term" value="C:ubiquitin ligase complex"/>
    <property type="evidence" value="ECO:0007669"/>
    <property type="project" value="Ensembl"/>
</dbReference>
<dbReference type="GO" id="GO:0005524">
    <property type="term" value="F:ATP binding"/>
    <property type="evidence" value="ECO:0007669"/>
    <property type="project" value="UniProtKB-KW"/>
</dbReference>
<dbReference type="GO" id="GO:0042296">
    <property type="term" value="F:ISG15 transferase activity"/>
    <property type="evidence" value="ECO:0007669"/>
    <property type="project" value="Ensembl"/>
</dbReference>
<dbReference type="GO" id="GO:0061631">
    <property type="term" value="F:ubiquitin conjugating enzyme activity"/>
    <property type="evidence" value="ECO:0000314"/>
    <property type="project" value="MGI"/>
</dbReference>
<dbReference type="GO" id="GO:0004842">
    <property type="term" value="F:ubiquitin-protein transferase activity"/>
    <property type="evidence" value="ECO:0000250"/>
    <property type="project" value="UniProtKB"/>
</dbReference>
<dbReference type="GO" id="GO:0032020">
    <property type="term" value="P:ISG15-protein conjugation"/>
    <property type="evidence" value="ECO:0007669"/>
    <property type="project" value="Ensembl"/>
</dbReference>
<dbReference type="GO" id="GO:0045944">
    <property type="term" value="P:positive regulation of transcription by RNA polymerase II"/>
    <property type="evidence" value="ECO:0007669"/>
    <property type="project" value="Ensembl"/>
</dbReference>
<dbReference type="GO" id="GO:0070936">
    <property type="term" value="P:protein K48-linked ubiquitination"/>
    <property type="evidence" value="ECO:0000250"/>
    <property type="project" value="UniProtKB"/>
</dbReference>
<dbReference type="GO" id="GO:0006513">
    <property type="term" value="P:protein monoubiquitination"/>
    <property type="evidence" value="ECO:0007669"/>
    <property type="project" value="Ensembl"/>
</dbReference>
<dbReference type="GO" id="GO:0016567">
    <property type="term" value="P:protein ubiquitination"/>
    <property type="evidence" value="ECO:0000316"/>
    <property type="project" value="MGI"/>
</dbReference>
<dbReference type="CDD" id="cd23793">
    <property type="entry name" value="UBCc_UBE2E"/>
    <property type="match status" value="1"/>
</dbReference>
<dbReference type="FunFam" id="3.10.110.10:FF:000003">
    <property type="entry name" value="Ubiquitin-conjugating enzyme E2 E3"/>
    <property type="match status" value="1"/>
</dbReference>
<dbReference type="Gene3D" id="3.10.110.10">
    <property type="entry name" value="Ubiquitin Conjugating Enzyme"/>
    <property type="match status" value="1"/>
</dbReference>
<dbReference type="InterPro" id="IPR000608">
    <property type="entry name" value="UBQ-conjugat_E2_core"/>
</dbReference>
<dbReference type="InterPro" id="IPR023313">
    <property type="entry name" value="UBQ-conjugating_AS"/>
</dbReference>
<dbReference type="InterPro" id="IPR016135">
    <property type="entry name" value="UBQ-conjugating_enzyme/RWD"/>
</dbReference>
<dbReference type="PANTHER" id="PTHR24068">
    <property type="entry name" value="UBIQUITIN-CONJUGATING ENZYME E2"/>
    <property type="match status" value="1"/>
</dbReference>
<dbReference type="Pfam" id="PF00179">
    <property type="entry name" value="UQ_con"/>
    <property type="match status" value="1"/>
</dbReference>
<dbReference type="SMART" id="SM00212">
    <property type="entry name" value="UBCc"/>
    <property type="match status" value="1"/>
</dbReference>
<dbReference type="SUPFAM" id="SSF54495">
    <property type="entry name" value="UBC-like"/>
    <property type="match status" value="1"/>
</dbReference>
<dbReference type="PROSITE" id="PS00183">
    <property type="entry name" value="UBC_1"/>
    <property type="match status" value="1"/>
</dbReference>
<dbReference type="PROSITE" id="PS50127">
    <property type="entry name" value="UBC_2"/>
    <property type="match status" value="1"/>
</dbReference>
<feature type="initiator methionine" description="Removed" evidence="1">
    <location>
        <position position="1"/>
    </location>
</feature>
<feature type="chain" id="PRO_0000082471" description="Ubiquitin-conjugating enzyme E2 E1">
    <location>
        <begin position="2"/>
        <end position="193"/>
    </location>
</feature>
<feature type="domain" description="UBC core" evidence="2">
    <location>
        <begin position="47"/>
        <end position="193"/>
    </location>
</feature>
<feature type="region of interest" description="Disordered" evidence="4">
    <location>
        <begin position="1"/>
        <end position="45"/>
    </location>
</feature>
<feature type="compositionally biased region" description="Low complexity" evidence="4">
    <location>
        <begin position="8"/>
        <end position="18"/>
    </location>
</feature>
<feature type="compositionally biased region" description="Basic and acidic residues" evidence="4">
    <location>
        <begin position="22"/>
        <end position="35"/>
    </location>
</feature>
<feature type="compositionally biased region" description="Polar residues" evidence="4">
    <location>
        <begin position="36"/>
        <end position="45"/>
    </location>
</feature>
<feature type="active site" description="Glycyl thioester intermediate" evidence="2 3">
    <location>
        <position position="131"/>
    </location>
</feature>
<feature type="modified residue" description="N-acetylserine" evidence="1">
    <location>
        <position position="2"/>
    </location>
</feature>
<feature type="cross-link" description="Glycyl lysine isopeptide (Lys-Gly) (interchain with G-Cter in ISG15)" evidence="1">
    <location>
        <position position="136"/>
    </location>
</feature>
<gene>
    <name type="primary">Ube2e1</name>
    <name type="synonym">Ubce5</name>
    <name type="synonym">Ubcm3</name>
</gene>
<organism>
    <name type="scientific">Mus musculus</name>
    <name type="common">Mouse</name>
    <dbReference type="NCBI Taxonomy" id="10090"/>
    <lineage>
        <taxon>Eukaryota</taxon>
        <taxon>Metazoa</taxon>
        <taxon>Chordata</taxon>
        <taxon>Craniata</taxon>
        <taxon>Vertebrata</taxon>
        <taxon>Euteleostomi</taxon>
        <taxon>Mammalia</taxon>
        <taxon>Eutheria</taxon>
        <taxon>Euarchontoglires</taxon>
        <taxon>Glires</taxon>
        <taxon>Rodentia</taxon>
        <taxon>Myomorpha</taxon>
        <taxon>Muroidea</taxon>
        <taxon>Muridae</taxon>
        <taxon>Murinae</taxon>
        <taxon>Mus</taxon>
        <taxon>Mus</taxon>
    </lineage>
</organism>
<proteinExistence type="evidence at protein level"/>
<evidence type="ECO:0000250" key="1">
    <source>
        <dbReference type="UniProtKB" id="P51965"/>
    </source>
</evidence>
<evidence type="ECO:0000255" key="2">
    <source>
        <dbReference type="PROSITE-ProRule" id="PRU00388"/>
    </source>
</evidence>
<evidence type="ECO:0000255" key="3">
    <source>
        <dbReference type="PROSITE-ProRule" id="PRU10133"/>
    </source>
</evidence>
<evidence type="ECO:0000256" key="4">
    <source>
        <dbReference type="SAM" id="MobiDB-lite"/>
    </source>
</evidence>